<comment type="similarity">
    <text evidence="1">Belongs to the bacterial ribosomal protein bL28 family.</text>
</comment>
<name>RL28_LEVBA</name>
<feature type="chain" id="PRO_1000007258" description="Large ribosomal subunit protein bL28">
    <location>
        <begin position="1"/>
        <end position="61"/>
    </location>
</feature>
<feature type="region of interest" description="Disordered" evidence="2">
    <location>
        <begin position="1"/>
        <end position="26"/>
    </location>
</feature>
<feature type="compositionally biased region" description="Basic residues" evidence="2">
    <location>
        <begin position="9"/>
        <end position="19"/>
    </location>
</feature>
<organism>
    <name type="scientific">Levilactobacillus brevis (strain ATCC 367 / BCRC 12310 / CIP 105137 / JCM 1170 / LMG 11437 / NCIMB 947 / NCTC 947)</name>
    <name type="common">Lactobacillus brevis</name>
    <dbReference type="NCBI Taxonomy" id="387344"/>
    <lineage>
        <taxon>Bacteria</taxon>
        <taxon>Bacillati</taxon>
        <taxon>Bacillota</taxon>
        <taxon>Bacilli</taxon>
        <taxon>Lactobacillales</taxon>
        <taxon>Lactobacillaceae</taxon>
        <taxon>Levilactobacillus</taxon>
    </lineage>
</organism>
<sequence length="61" mass="7013">MAKDFLNGKRTHFGNKRSHALNSSRRAWKPNLQKVRILVDGKPKKVWISARTLKSGKVTRV</sequence>
<protein>
    <recommendedName>
        <fullName evidence="1">Large ribosomal subunit protein bL28</fullName>
    </recommendedName>
    <alternativeName>
        <fullName evidence="3">50S ribosomal protein L28</fullName>
    </alternativeName>
</protein>
<proteinExistence type="inferred from homology"/>
<reference key="1">
    <citation type="journal article" date="2006" name="Proc. Natl. Acad. Sci. U.S.A.">
        <title>Comparative genomics of the lactic acid bacteria.</title>
        <authorList>
            <person name="Makarova K.S."/>
            <person name="Slesarev A."/>
            <person name="Wolf Y.I."/>
            <person name="Sorokin A."/>
            <person name="Mirkin B."/>
            <person name="Koonin E.V."/>
            <person name="Pavlov A."/>
            <person name="Pavlova N."/>
            <person name="Karamychev V."/>
            <person name="Polouchine N."/>
            <person name="Shakhova V."/>
            <person name="Grigoriev I."/>
            <person name="Lou Y."/>
            <person name="Rohksar D."/>
            <person name="Lucas S."/>
            <person name="Huang K."/>
            <person name="Goodstein D.M."/>
            <person name="Hawkins T."/>
            <person name="Plengvidhya V."/>
            <person name="Welker D."/>
            <person name="Hughes J."/>
            <person name="Goh Y."/>
            <person name="Benson A."/>
            <person name="Baldwin K."/>
            <person name="Lee J.-H."/>
            <person name="Diaz-Muniz I."/>
            <person name="Dosti B."/>
            <person name="Smeianov V."/>
            <person name="Wechter W."/>
            <person name="Barabote R."/>
            <person name="Lorca G."/>
            <person name="Altermann E."/>
            <person name="Barrangou R."/>
            <person name="Ganesan B."/>
            <person name="Xie Y."/>
            <person name="Rawsthorne H."/>
            <person name="Tamir D."/>
            <person name="Parker C."/>
            <person name="Breidt F."/>
            <person name="Broadbent J.R."/>
            <person name="Hutkins R."/>
            <person name="O'Sullivan D."/>
            <person name="Steele J."/>
            <person name="Unlu G."/>
            <person name="Saier M.H. Jr."/>
            <person name="Klaenhammer T."/>
            <person name="Richardson P."/>
            <person name="Kozyavkin S."/>
            <person name="Weimer B.C."/>
            <person name="Mills D.A."/>
        </authorList>
    </citation>
    <scope>NUCLEOTIDE SEQUENCE [LARGE SCALE GENOMIC DNA]</scope>
    <source>
        <strain>ATCC 367 / BCRC 12310 / CIP 105137 / JCM 1170 / LMG 11437 / NCIMB 947 / NCTC 947</strain>
    </source>
</reference>
<evidence type="ECO:0000255" key="1">
    <source>
        <dbReference type="HAMAP-Rule" id="MF_00373"/>
    </source>
</evidence>
<evidence type="ECO:0000256" key="2">
    <source>
        <dbReference type="SAM" id="MobiDB-lite"/>
    </source>
</evidence>
<evidence type="ECO:0000305" key="3"/>
<dbReference type="EMBL" id="CP000416">
    <property type="protein sequence ID" value="ABJ64092.1"/>
    <property type="molecule type" value="Genomic_DNA"/>
</dbReference>
<dbReference type="RefSeq" id="WP_011667682.1">
    <property type="nucleotide sequence ID" value="NC_008497.1"/>
</dbReference>
<dbReference type="SMR" id="Q03RT0"/>
<dbReference type="STRING" id="387344.LVIS_0958"/>
<dbReference type="GeneID" id="56992822"/>
<dbReference type="KEGG" id="lbr:LVIS_0958"/>
<dbReference type="eggNOG" id="COG0227">
    <property type="taxonomic scope" value="Bacteria"/>
</dbReference>
<dbReference type="HOGENOM" id="CLU_064548_7_1_9"/>
<dbReference type="Proteomes" id="UP000001652">
    <property type="component" value="Chromosome"/>
</dbReference>
<dbReference type="GO" id="GO:1990904">
    <property type="term" value="C:ribonucleoprotein complex"/>
    <property type="evidence" value="ECO:0007669"/>
    <property type="project" value="UniProtKB-KW"/>
</dbReference>
<dbReference type="GO" id="GO:0005840">
    <property type="term" value="C:ribosome"/>
    <property type="evidence" value="ECO:0007669"/>
    <property type="project" value="UniProtKB-KW"/>
</dbReference>
<dbReference type="GO" id="GO:0003735">
    <property type="term" value="F:structural constituent of ribosome"/>
    <property type="evidence" value="ECO:0007669"/>
    <property type="project" value="InterPro"/>
</dbReference>
<dbReference type="GO" id="GO:0006412">
    <property type="term" value="P:translation"/>
    <property type="evidence" value="ECO:0007669"/>
    <property type="project" value="UniProtKB-UniRule"/>
</dbReference>
<dbReference type="Gene3D" id="2.30.170.40">
    <property type="entry name" value="Ribosomal protein L28/L24"/>
    <property type="match status" value="1"/>
</dbReference>
<dbReference type="HAMAP" id="MF_00373">
    <property type="entry name" value="Ribosomal_bL28"/>
    <property type="match status" value="1"/>
</dbReference>
<dbReference type="InterPro" id="IPR050096">
    <property type="entry name" value="Bacterial_rp_bL28"/>
</dbReference>
<dbReference type="InterPro" id="IPR026569">
    <property type="entry name" value="Ribosomal_bL28"/>
</dbReference>
<dbReference type="InterPro" id="IPR034704">
    <property type="entry name" value="Ribosomal_bL28/bL31-like_sf"/>
</dbReference>
<dbReference type="InterPro" id="IPR001383">
    <property type="entry name" value="Ribosomal_bL28_bact-type"/>
</dbReference>
<dbReference type="InterPro" id="IPR037147">
    <property type="entry name" value="Ribosomal_bL28_sf"/>
</dbReference>
<dbReference type="NCBIfam" id="TIGR00009">
    <property type="entry name" value="L28"/>
    <property type="match status" value="1"/>
</dbReference>
<dbReference type="PANTHER" id="PTHR39080">
    <property type="entry name" value="50S RIBOSOMAL PROTEIN L28"/>
    <property type="match status" value="1"/>
</dbReference>
<dbReference type="PANTHER" id="PTHR39080:SF1">
    <property type="entry name" value="LARGE RIBOSOMAL SUBUNIT PROTEIN BL28A"/>
    <property type="match status" value="1"/>
</dbReference>
<dbReference type="Pfam" id="PF00830">
    <property type="entry name" value="Ribosomal_L28"/>
    <property type="match status" value="1"/>
</dbReference>
<dbReference type="SUPFAM" id="SSF143800">
    <property type="entry name" value="L28p-like"/>
    <property type="match status" value="1"/>
</dbReference>
<accession>Q03RT0</accession>
<gene>
    <name evidence="1" type="primary">rpmB</name>
    <name type="ordered locus">LVIS_0958</name>
</gene>
<keyword id="KW-1185">Reference proteome</keyword>
<keyword id="KW-0687">Ribonucleoprotein</keyword>
<keyword id="KW-0689">Ribosomal protein</keyword>